<name>NDUS2_MESAU</name>
<protein>
    <recommendedName>
        <fullName evidence="2">NADH dehydrogenase [ubiquinone] iron-sulfur protein 2, mitochondrial</fullName>
        <ecNumber evidence="4">7.1.1.2</ecNumber>
    </recommendedName>
    <alternativeName>
        <fullName evidence="2">Complex I-49kD</fullName>
        <shortName evidence="2">CI-49kD</shortName>
    </alternativeName>
    <alternativeName>
        <fullName evidence="2">NADH-ubiquinone oxidoreductase 49 kDa subunit</fullName>
    </alternativeName>
</protein>
<accession>P86250</accession>
<reference key="1">
    <citation type="journal article" date="2010" name="Asian J. Androl.">
        <title>Glucose-regulated protein precursor (GRP78) and tumor rejection antigen (GP96) are unique to hamster caput epididymal spermatozoa.</title>
        <authorList>
            <person name="Kameshwari D.B."/>
            <person name="Bhande S."/>
            <person name="Sundaram C.S."/>
            <person name="Kota V."/>
            <person name="Siva A.B."/>
            <person name="Shivaji S."/>
        </authorList>
    </citation>
    <scope>IDENTIFICATION BY MASS SPECTROMETRY</scope>
</reference>
<proteinExistence type="evidence at protein level"/>
<gene>
    <name evidence="2" type="primary">NDUFS2</name>
</gene>
<feature type="chain" id="PRO_0000394421" description="NADH dehydrogenase [ubiquinone] iron-sulfur protein 2, mitochondrial">
    <location>
        <begin position="1" status="less than"/>
        <end position="138"/>
    </location>
</feature>
<feature type="non-consecutive residues" evidence="6">
    <location>
        <begin position="11"/>
        <end position="12"/>
    </location>
</feature>
<feature type="non-consecutive residues" evidence="6">
    <location>
        <begin position="20"/>
        <end position="21"/>
    </location>
</feature>
<feature type="non-consecutive residues" evidence="6">
    <location>
        <begin position="29"/>
        <end position="30"/>
    </location>
</feature>
<feature type="non-consecutive residues" evidence="6">
    <location>
        <begin position="74"/>
        <end position="75"/>
    </location>
</feature>
<feature type="non-consecutive residues" evidence="6">
    <location>
        <begin position="94"/>
        <end position="95"/>
    </location>
</feature>
<feature type="non-consecutive residues" evidence="6">
    <location>
        <begin position="115"/>
        <end position="116"/>
    </location>
</feature>
<feature type="non-terminal residue">
    <location>
        <position position="1"/>
    </location>
</feature>
<comment type="function">
    <text evidence="4">Core subunit of the mitochondrial membrane respiratory chain NADH dehydrogenase (Complex I) which catalyzes electron transfer from NADH through the respiratory chain, using ubiquinone as an electron acceptor (By similarity). Essential for the catalytic activity and assembly of complex I (By similarity). Redox-sensitive, critical component of the oxygen-sensing pathway in the pulmonary vasculature which plays a key role in acute pulmonary oxygen-sensing and hypoxic pulmonary vasoconstriction (By similarity). Plays an important role in carotid body sensing of hypoxia (By similarity). Essential for glia-like neural stem and progenitor cell proliferation, differentiation and subsequent oligodendrocyte or neuronal maturation (By similarity).</text>
</comment>
<comment type="catalytic activity">
    <reaction evidence="4">
        <text>a ubiquinone + NADH + 5 H(+)(in) = a ubiquinol + NAD(+) + 4 H(+)(out)</text>
        <dbReference type="Rhea" id="RHEA:29091"/>
        <dbReference type="Rhea" id="RHEA-COMP:9565"/>
        <dbReference type="Rhea" id="RHEA-COMP:9566"/>
        <dbReference type="ChEBI" id="CHEBI:15378"/>
        <dbReference type="ChEBI" id="CHEBI:16389"/>
        <dbReference type="ChEBI" id="CHEBI:17976"/>
        <dbReference type="ChEBI" id="CHEBI:57540"/>
        <dbReference type="ChEBI" id="CHEBI:57945"/>
        <dbReference type="EC" id="7.1.1.2"/>
    </reaction>
</comment>
<comment type="cofactor">
    <cofactor evidence="2">
        <name>[4Fe-4S] cluster</name>
        <dbReference type="ChEBI" id="CHEBI:49883"/>
    </cofactor>
    <text evidence="2">Binds 1 [4Fe-4S] cluster.</text>
</comment>
<comment type="subunit">
    <text evidence="1 4">Core subunit of respiratory chain NADH dehydrogenase (Complex I) which is composed of 45 different subunits. Component of the iron-sulfur (IP) fragment of the enzyme. Interacts with NDUFAF3. Interacts with NDUFAF7 (By similarity). Interacts with CERS2 (By similarity).</text>
</comment>
<comment type="subcellular location">
    <subcellularLocation>
        <location evidence="3">Mitochondrion inner membrane</location>
        <topology evidence="3">Peripheral membrane protein</topology>
        <orientation evidence="3">Matrix side</orientation>
    </subcellularLocation>
</comment>
<comment type="PTM">
    <text evidence="1">Dimethylation at Arg-118 by NDUFAF7 takes place after NDUFS2 assembles into the complex I, leading to stabilize the early intermediate complex.</text>
</comment>
<comment type="similarity">
    <text evidence="5">Belongs to the complex I 49 kDa subunit family.</text>
</comment>
<keyword id="KW-0004">4Fe-4S</keyword>
<keyword id="KW-0249">Electron transport</keyword>
<keyword id="KW-0408">Iron</keyword>
<keyword id="KW-0411">Iron-sulfur</keyword>
<keyword id="KW-0472">Membrane</keyword>
<keyword id="KW-0479">Metal-binding</keyword>
<keyword id="KW-0496">Mitochondrion</keyword>
<keyword id="KW-0999">Mitochondrion inner membrane</keyword>
<keyword id="KW-0520">NAD</keyword>
<keyword id="KW-0560">Oxidoreductase</keyword>
<keyword id="KW-1185">Reference proteome</keyword>
<keyword id="KW-0679">Respiratory chain</keyword>
<keyword id="KW-1278">Translocase</keyword>
<keyword id="KW-0813">Transport</keyword>
<keyword id="KW-0830">Ubiquinone</keyword>
<evidence type="ECO:0000250" key="1">
    <source>
        <dbReference type="UniProtKB" id="O75306"/>
    </source>
</evidence>
<evidence type="ECO:0000250" key="2">
    <source>
        <dbReference type="UniProtKB" id="P17694"/>
    </source>
</evidence>
<evidence type="ECO:0000250" key="3">
    <source>
        <dbReference type="UniProtKB" id="Q641Y2"/>
    </source>
</evidence>
<evidence type="ECO:0000250" key="4">
    <source>
        <dbReference type="UniProtKB" id="Q91WD5"/>
    </source>
</evidence>
<evidence type="ECO:0000255" key="5"/>
<evidence type="ECO:0000305" key="6"/>
<dbReference type="EC" id="7.1.1.2" evidence="4"/>
<dbReference type="Proteomes" id="UP000189706">
    <property type="component" value="Unplaced"/>
</dbReference>
<dbReference type="GO" id="GO:0005743">
    <property type="term" value="C:mitochondrial inner membrane"/>
    <property type="evidence" value="ECO:0000250"/>
    <property type="project" value="UniProtKB"/>
</dbReference>
<dbReference type="GO" id="GO:0051539">
    <property type="term" value="F:4 iron, 4 sulfur cluster binding"/>
    <property type="evidence" value="ECO:0007669"/>
    <property type="project" value="UniProtKB-KW"/>
</dbReference>
<dbReference type="GO" id="GO:0046872">
    <property type="term" value="F:metal ion binding"/>
    <property type="evidence" value="ECO:0007669"/>
    <property type="project" value="UniProtKB-KW"/>
</dbReference>
<dbReference type="GO" id="GO:0051287">
    <property type="term" value="F:NAD binding"/>
    <property type="evidence" value="ECO:0007669"/>
    <property type="project" value="InterPro"/>
</dbReference>
<dbReference type="GO" id="GO:0008137">
    <property type="term" value="F:NADH dehydrogenase (ubiquinone) activity"/>
    <property type="evidence" value="ECO:0000250"/>
    <property type="project" value="UniProtKB"/>
</dbReference>
<dbReference type="GO" id="GO:0019826">
    <property type="term" value="F:oxygen sensor activity"/>
    <property type="evidence" value="ECO:0000250"/>
    <property type="project" value="UniProtKB"/>
</dbReference>
<dbReference type="GO" id="GO:0048038">
    <property type="term" value="F:quinone binding"/>
    <property type="evidence" value="ECO:0007669"/>
    <property type="project" value="InterPro"/>
</dbReference>
<dbReference type="GO" id="GO:0071453">
    <property type="term" value="P:cellular response to oxygen levels"/>
    <property type="evidence" value="ECO:0000250"/>
    <property type="project" value="UniProtKB"/>
</dbReference>
<dbReference type="GO" id="GO:0042063">
    <property type="term" value="P:gliogenesis"/>
    <property type="evidence" value="ECO:0000250"/>
    <property type="project" value="UniProtKB"/>
</dbReference>
<dbReference type="GO" id="GO:0006120">
    <property type="term" value="P:mitochondrial electron transport, NADH to ubiquinone"/>
    <property type="evidence" value="ECO:0000250"/>
    <property type="project" value="UniProtKB"/>
</dbReference>
<dbReference type="GO" id="GO:0032981">
    <property type="term" value="P:mitochondrial respiratory chain complex I assembly"/>
    <property type="evidence" value="ECO:0000250"/>
    <property type="project" value="UniProtKB"/>
</dbReference>
<dbReference type="GO" id="GO:0061351">
    <property type="term" value="P:neural precursor cell proliferation"/>
    <property type="evidence" value="ECO:0000250"/>
    <property type="project" value="UniProtKB"/>
</dbReference>
<dbReference type="GO" id="GO:0022008">
    <property type="term" value="P:neurogenesis"/>
    <property type="evidence" value="ECO:0000250"/>
    <property type="project" value="UniProtKB"/>
</dbReference>
<dbReference type="Gene3D" id="1.10.645.10">
    <property type="entry name" value="Cytochrome-c3 Hydrogenase, chain B"/>
    <property type="match status" value="2"/>
</dbReference>
<dbReference type="InterPro" id="IPR001135">
    <property type="entry name" value="NADH_Q_OxRdtase_suD"/>
</dbReference>
<dbReference type="InterPro" id="IPR022885">
    <property type="entry name" value="NDH1_su_D/H"/>
</dbReference>
<dbReference type="InterPro" id="IPR029014">
    <property type="entry name" value="NiFe-Hase_large"/>
</dbReference>
<dbReference type="PANTHER" id="PTHR11993:SF10">
    <property type="entry name" value="NADH DEHYDROGENASE [UBIQUINONE] IRON-SULFUR PROTEIN 2, MITOCHONDRIAL"/>
    <property type="match status" value="1"/>
</dbReference>
<dbReference type="PANTHER" id="PTHR11993">
    <property type="entry name" value="NADH-UBIQUINONE OXIDOREDUCTASE 49 KDA SUBUNIT"/>
    <property type="match status" value="1"/>
</dbReference>
<dbReference type="Pfam" id="PF00346">
    <property type="entry name" value="Complex1_49kDa"/>
    <property type="match status" value="1"/>
</dbReference>
<dbReference type="SUPFAM" id="SSF56762">
    <property type="entry name" value="HydB/Nqo4-like"/>
    <property type="match status" value="1"/>
</dbReference>
<organism>
    <name type="scientific">Mesocricetus auratus</name>
    <name type="common">Golden hamster</name>
    <dbReference type="NCBI Taxonomy" id="10036"/>
    <lineage>
        <taxon>Eukaryota</taxon>
        <taxon>Metazoa</taxon>
        <taxon>Chordata</taxon>
        <taxon>Craniata</taxon>
        <taxon>Vertebrata</taxon>
        <taxon>Euteleostomi</taxon>
        <taxon>Mammalia</taxon>
        <taxon>Eutheria</taxon>
        <taxon>Euarchontoglires</taxon>
        <taxon>Glires</taxon>
        <taxon>Rodentia</taxon>
        <taxon>Myomorpha</taxon>
        <taxon>Muroidea</taxon>
        <taxon>Cricetidae</taxon>
        <taxon>Cricetinae</taxon>
        <taxon>Mesocricetus</taxon>
    </lineage>
</organism>
<sequence>TYLQALPYFDRLLNIQPPPREKMFEFYERMHAAYIRPGGVHQDLPLGLMDDIYEFSKNFSLRIDEVEEMLTNNRKTQPYDVYDQVEFDVPIGSRLYTEGYQVPPGATYTAIEAPKGHMLADVVAIIGTQDIVFGEIDR</sequence>